<organism>
    <name type="scientific">Synechococcus sp. (strain JA-2-3B'a(2-13))</name>
    <name type="common">Cyanobacteria bacterium Yellowstone B-Prime</name>
    <dbReference type="NCBI Taxonomy" id="321332"/>
    <lineage>
        <taxon>Bacteria</taxon>
        <taxon>Bacillati</taxon>
        <taxon>Cyanobacteriota</taxon>
        <taxon>Cyanophyceae</taxon>
        <taxon>Synechococcales</taxon>
        <taxon>Synechococcaceae</taxon>
        <taxon>Synechococcus</taxon>
    </lineage>
</organism>
<comment type="function">
    <text evidence="1">Could be involved in insertion of integral membrane proteins into the membrane.</text>
</comment>
<comment type="subcellular location">
    <subcellularLocation>
        <location evidence="1">Cell inner membrane</location>
        <topology evidence="1">Peripheral membrane protein</topology>
        <orientation evidence="1">Cytoplasmic side</orientation>
    </subcellularLocation>
</comment>
<comment type="similarity">
    <text evidence="1">Belongs to the UPF0161 family.</text>
</comment>
<accession>Q2JNV4</accession>
<proteinExistence type="inferred from homology"/>
<dbReference type="EMBL" id="CP000240">
    <property type="protein sequence ID" value="ABD01551.1"/>
    <property type="molecule type" value="Genomic_DNA"/>
</dbReference>
<dbReference type="STRING" id="321332.CYB_0560"/>
<dbReference type="KEGG" id="cyb:CYB_0560"/>
<dbReference type="eggNOG" id="COG0759">
    <property type="taxonomic scope" value="Bacteria"/>
</dbReference>
<dbReference type="HOGENOM" id="CLU_144811_2_2_3"/>
<dbReference type="OrthoDB" id="9801753at2"/>
<dbReference type="Proteomes" id="UP000001938">
    <property type="component" value="Chromosome"/>
</dbReference>
<dbReference type="GO" id="GO:0005886">
    <property type="term" value="C:plasma membrane"/>
    <property type="evidence" value="ECO:0007669"/>
    <property type="project" value="UniProtKB-SubCell"/>
</dbReference>
<dbReference type="HAMAP" id="MF_00386">
    <property type="entry name" value="UPF0161_YidD"/>
    <property type="match status" value="1"/>
</dbReference>
<dbReference type="InterPro" id="IPR002696">
    <property type="entry name" value="Membr_insert_effic_factor_YidD"/>
</dbReference>
<dbReference type="NCBIfam" id="TIGR00278">
    <property type="entry name" value="membrane protein insertion efficiency factor YidD"/>
    <property type="match status" value="1"/>
</dbReference>
<dbReference type="PANTHER" id="PTHR33383">
    <property type="entry name" value="MEMBRANE PROTEIN INSERTION EFFICIENCY FACTOR-RELATED"/>
    <property type="match status" value="1"/>
</dbReference>
<dbReference type="PANTHER" id="PTHR33383:SF1">
    <property type="entry name" value="MEMBRANE PROTEIN INSERTION EFFICIENCY FACTOR-RELATED"/>
    <property type="match status" value="1"/>
</dbReference>
<dbReference type="Pfam" id="PF01809">
    <property type="entry name" value="YidD"/>
    <property type="match status" value="1"/>
</dbReference>
<dbReference type="SMART" id="SM01234">
    <property type="entry name" value="Haemolytic"/>
    <property type="match status" value="1"/>
</dbReference>
<gene>
    <name type="ordered locus">CYB_0560</name>
</gene>
<protein>
    <recommendedName>
        <fullName evidence="1">Putative membrane protein insertion efficiency factor</fullName>
    </recommendedName>
</protein>
<reference key="1">
    <citation type="journal article" date="2007" name="ISME J.">
        <title>Population level functional diversity in a microbial community revealed by comparative genomic and metagenomic analyses.</title>
        <authorList>
            <person name="Bhaya D."/>
            <person name="Grossman A.R."/>
            <person name="Steunou A.-S."/>
            <person name="Khuri N."/>
            <person name="Cohan F.M."/>
            <person name="Hamamura N."/>
            <person name="Melendrez M.C."/>
            <person name="Bateson M.M."/>
            <person name="Ward D.M."/>
            <person name="Heidelberg J.F."/>
        </authorList>
    </citation>
    <scope>NUCLEOTIDE SEQUENCE [LARGE SCALE GENOMIC DNA]</scope>
    <source>
        <strain>JA-2-3B'a(2-13)</strain>
    </source>
</reference>
<sequence length="89" mass="10095">MPERSDPLTRSLIALIRGYQVGISPWLPPACRYYPTCSQYTLEAVRRYGALRGGWLGIRRLCRCHPWHPGGYDPVPDLPGSAPTQKPFR</sequence>
<name>YIDD_SYNJB</name>
<keyword id="KW-0997">Cell inner membrane</keyword>
<keyword id="KW-1003">Cell membrane</keyword>
<keyword id="KW-0472">Membrane</keyword>
<keyword id="KW-1185">Reference proteome</keyword>
<evidence type="ECO:0000255" key="1">
    <source>
        <dbReference type="HAMAP-Rule" id="MF_00386"/>
    </source>
</evidence>
<evidence type="ECO:0000256" key="2">
    <source>
        <dbReference type="SAM" id="MobiDB-lite"/>
    </source>
</evidence>
<feature type="chain" id="PRO_0000253188" description="Putative membrane protein insertion efficiency factor">
    <location>
        <begin position="1"/>
        <end position="89"/>
    </location>
</feature>
<feature type="region of interest" description="Disordered" evidence="2">
    <location>
        <begin position="69"/>
        <end position="89"/>
    </location>
</feature>